<gene>
    <name evidence="1" type="primary">dtd</name>
    <name type="ordered locus">LCA_0738</name>
</gene>
<comment type="function">
    <text evidence="1">An aminoacyl-tRNA editing enzyme that deacylates mischarged D-aminoacyl-tRNAs. Also deacylates mischarged glycyl-tRNA(Ala), protecting cells against glycine mischarging by AlaRS. Acts via tRNA-based rather than protein-based catalysis; rejects L-amino acids rather than detecting D-amino acids in the active site. By recycling D-aminoacyl-tRNA to D-amino acids and free tRNA molecules, this enzyme counteracts the toxicity associated with the formation of D-aminoacyl-tRNA entities in vivo and helps enforce protein L-homochirality.</text>
</comment>
<comment type="catalytic activity">
    <reaction evidence="1">
        <text>glycyl-tRNA(Ala) + H2O = tRNA(Ala) + glycine + H(+)</text>
        <dbReference type="Rhea" id="RHEA:53744"/>
        <dbReference type="Rhea" id="RHEA-COMP:9657"/>
        <dbReference type="Rhea" id="RHEA-COMP:13640"/>
        <dbReference type="ChEBI" id="CHEBI:15377"/>
        <dbReference type="ChEBI" id="CHEBI:15378"/>
        <dbReference type="ChEBI" id="CHEBI:57305"/>
        <dbReference type="ChEBI" id="CHEBI:78442"/>
        <dbReference type="ChEBI" id="CHEBI:78522"/>
        <dbReference type="EC" id="3.1.1.96"/>
    </reaction>
</comment>
<comment type="catalytic activity">
    <reaction evidence="1">
        <text>a D-aminoacyl-tRNA + H2O = a tRNA + a D-alpha-amino acid + H(+)</text>
        <dbReference type="Rhea" id="RHEA:13953"/>
        <dbReference type="Rhea" id="RHEA-COMP:10123"/>
        <dbReference type="Rhea" id="RHEA-COMP:10124"/>
        <dbReference type="ChEBI" id="CHEBI:15377"/>
        <dbReference type="ChEBI" id="CHEBI:15378"/>
        <dbReference type="ChEBI" id="CHEBI:59871"/>
        <dbReference type="ChEBI" id="CHEBI:78442"/>
        <dbReference type="ChEBI" id="CHEBI:79333"/>
        <dbReference type="EC" id="3.1.1.96"/>
    </reaction>
</comment>
<comment type="subunit">
    <text evidence="1">Homodimer.</text>
</comment>
<comment type="subcellular location">
    <subcellularLocation>
        <location evidence="1">Cytoplasm</location>
    </subcellularLocation>
</comment>
<comment type="domain">
    <text evidence="1">A Gly-cisPro motif from one monomer fits into the active site of the other monomer to allow specific chiral rejection of L-amino acids.</text>
</comment>
<comment type="similarity">
    <text evidence="1">Belongs to the DTD family.</text>
</comment>
<proteinExistence type="inferred from homology"/>
<evidence type="ECO:0000255" key="1">
    <source>
        <dbReference type="HAMAP-Rule" id="MF_00518"/>
    </source>
</evidence>
<organism>
    <name type="scientific">Latilactobacillus sakei subsp. sakei (strain 23K)</name>
    <name type="common">Lactobacillus sakei subsp. sakei</name>
    <dbReference type="NCBI Taxonomy" id="314315"/>
    <lineage>
        <taxon>Bacteria</taxon>
        <taxon>Bacillati</taxon>
        <taxon>Bacillota</taxon>
        <taxon>Bacilli</taxon>
        <taxon>Lactobacillales</taxon>
        <taxon>Lactobacillaceae</taxon>
        <taxon>Latilactobacillus</taxon>
    </lineage>
</organism>
<keyword id="KW-0963">Cytoplasm</keyword>
<keyword id="KW-0378">Hydrolase</keyword>
<keyword id="KW-1185">Reference proteome</keyword>
<keyword id="KW-0694">RNA-binding</keyword>
<keyword id="KW-0820">tRNA-binding</keyword>
<sequence length="148" mass="16110">MKVVLQRVSQASVTIEEQVVGQINKGFLLLVGICDDDTEADLDYLVKKISQLRVFEDEAGKMNLALGQVNGAILSVSQFTLYASTKKGNRPSFTDAGQPDYAQKMYNLFNQKLAATGIAVETGEFGADMQVALVNDGPVTILFDTRDN</sequence>
<feature type="chain" id="PRO_0000259289" description="D-aminoacyl-tRNA deacylase">
    <location>
        <begin position="1"/>
        <end position="148"/>
    </location>
</feature>
<feature type="short sequence motif" description="Gly-cisPro motif, important for rejection of L-amino acids" evidence="1">
    <location>
        <begin position="137"/>
        <end position="138"/>
    </location>
</feature>
<accession>Q38XN8</accession>
<protein>
    <recommendedName>
        <fullName evidence="1">D-aminoacyl-tRNA deacylase</fullName>
        <shortName evidence="1">DTD</shortName>
        <ecNumber evidence="1">3.1.1.96</ecNumber>
    </recommendedName>
    <alternativeName>
        <fullName evidence="1">Gly-tRNA(Ala) deacylase</fullName>
    </alternativeName>
</protein>
<reference key="1">
    <citation type="journal article" date="2005" name="Nat. Biotechnol.">
        <title>The complete genome sequence of the meat-borne lactic acid bacterium Lactobacillus sakei 23K.</title>
        <authorList>
            <person name="Chaillou S."/>
            <person name="Champomier-Verges M.-C."/>
            <person name="Cornet M."/>
            <person name="Crutz-Le Coq A.-M."/>
            <person name="Dudez A.-M."/>
            <person name="Martin V."/>
            <person name="Beaufils S."/>
            <person name="Darbon-Rongere E."/>
            <person name="Bossy R."/>
            <person name="Loux V."/>
            <person name="Zagorec M."/>
        </authorList>
    </citation>
    <scope>NUCLEOTIDE SEQUENCE [LARGE SCALE GENOMIC DNA]</scope>
    <source>
        <strain>23K</strain>
    </source>
</reference>
<dbReference type="EC" id="3.1.1.96" evidence="1"/>
<dbReference type="EMBL" id="CR936503">
    <property type="protein sequence ID" value="CAI55042.1"/>
    <property type="molecule type" value="Genomic_DNA"/>
</dbReference>
<dbReference type="RefSeq" id="WP_011374445.1">
    <property type="nucleotide sequence ID" value="NC_007576.1"/>
</dbReference>
<dbReference type="SMR" id="Q38XN8"/>
<dbReference type="STRING" id="314315.LCA_0738"/>
<dbReference type="KEGG" id="lsa:LCA_0738"/>
<dbReference type="eggNOG" id="COG1490">
    <property type="taxonomic scope" value="Bacteria"/>
</dbReference>
<dbReference type="HOGENOM" id="CLU_076901_1_0_9"/>
<dbReference type="OrthoDB" id="9801395at2"/>
<dbReference type="Proteomes" id="UP000002707">
    <property type="component" value="Chromosome"/>
</dbReference>
<dbReference type="GO" id="GO:0005737">
    <property type="term" value="C:cytoplasm"/>
    <property type="evidence" value="ECO:0007669"/>
    <property type="project" value="UniProtKB-SubCell"/>
</dbReference>
<dbReference type="GO" id="GO:0051500">
    <property type="term" value="F:D-tyrosyl-tRNA(Tyr) deacylase activity"/>
    <property type="evidence" value="ECO:0007669"/>
    <property type="project" value="TreeGrafter"/>
</dbReference>
<dbReference type="GO" id="GO:0106026">
    <property type="term" value="F:Gly-tRNA(Ala) deacylase activity"/>
    <property type="evidence" value="ECO:0007669"/>
    <property type="project" value="UniProtKB-UniRule"/>
</dbReference>
<dbReference type="GO" id="GO:0043908">
    <property type="term" value="F:Ser(Gly)-tRNA(Ala) hydrolase activity"/>
    <property type="evidence" value="ECO:0007669"/>
    <property type="project" value="UniProtKB-UniRule"/>
</dbReference>
<dbReference type="GO" id="GO:0000049">
    <property type="term" value="F:tRNA binding"/>
    <property type="evidence" value="ECO:0007669"/>
    <property type="project" value="UniProtKB-UniRule"/>
</dbReference>
<dbReference type="GO" id="GO:0019478">
    <property type="term" value="P:D-amino acid catabolic process"/>
    <property type="evidence" value="ECO:0007669"/>
    <property type="project" value="UniProtKB-UniRule"/>
</dbReference>
<dbReference type="CDD" id="cd00563">
    <property type="entry name" value="Dtyr_deacylase"/>
    <property type="match status" value="1"/>
</dbReference>
<dbReference type="FunFam" id="3.50.80.10:FF:000001">
    <property type="entry name" value="D-aminoacyl-tRNA deacylase"/>
    <property type="match status" value="1"/>
</dbReference>
<dbReference type="Gene3D" id="3.50.80.10">
    <property type="entry name" value="D-tyrosyl-tRNA(Tyr) deacylase"/>
    <property type="match status" value="1"/>
</dbReference>
<dbReference type="HAMAP" id="MF_00518">
    <property type="entry name" value="Deacylase_Dtd"/>
    <property type="match status" value="1"/>
</dbReference>
<dbReference type="InterPro" id="IPR003732">
    <property type="entry name" value="Daa-tRNA_deacyls_DTD"/>
</dbReference>
<dbReference type="InterPro" id="IPR023509">
    <property type="entry name" value="DTD-like_sf"/>
</dbReference>
<dbReference type="NCBIfam" id="TIGR00256">
    <property type="entry name" value="D-aminoacyl-tRNA deacylase"/>
    <property type="match status" value="1"/>
</dbReference>
<dbReference type="PANTHER" id="PTHR10472:SF5">
    <property type="entry name" value="D-AMINOACYL-TRNA DEACYLASE 1"/>
    <property type="match status" value="1"/>
</dbReference>
<dbReference type="PANTHER" id="PTHR10472">
    <property type="entry name" value="D-TYROSYL-TRNA TYR DEACYLASE"/>
    <property type="match status" value="1"/>
</dbReference>
<dbReference type="Pfam" id="PF02580">
    <property type="entry name" value="Tyr_Deacylase"/>
    <property type="match status" value="1"/>
</dbReference>
<dbReference type="SUPFAM" id="SSF69500">
    <property type="entry name" value="DTD-like"/>
    <property type="match status" value="1"/>
</dbReference>
<name>DTD_LATSS</name>